<organism>
    <name type="scientific">Chlamydia trachomatis serovar L2b (strain UCH-1/proctitis)</name>
    <dbReference type="NCBI Taxonomy" id="471473"/>
    <lineage>
        <taxon>Bacteria</taxon>
        <taxon>Pseudomonadati</taxon>
        <taxon>Chlamydiota</taxon>
        <taxon>Chlamydiia</taxon>
        <taxon>Chlamydiales</taxon>
        <taxon>Chlamydiaceae</taxon>
        <taxon>Chlamydia/Chlamydophila group</taxon>
        <taxon>Chlamydia</taxon>
    </lineage>
</organism>
<protein>
    <recommendedName>
        <fullName evidence="1">Glutamate-1-semialdehyde 2,1-aminomutase</fullName>
        <shortName evidence="1">GSA</shortName>
        <ecNumber evidence="1">5.4.3.8</ecNumber>
    </recommendedName>
    <alternativeName>
        <fullName evidence="1">Glutamate-1-semialdehyde aminotransferase</fullName>
        <shortName evidence="1">GSA-AT</shortName>
    </alternativeName>
</protein>
<reference key="1">
    <citation type="journal article" date="2008" name="Genome Res.">
        <title>Chlamydia trachomatis: genome sequence analysis of lymphogranuloma venereum isolates.</title>
        <authorList>
            <person name="Thomson N.R."/>
            <person name="Holden M.T.G."/>
            <person name="Carder C."/>
            <person name="Lennard N."/>
            <person name="Lockey S.J."/>
            <person name="Marsh P."/>
            <person name="Skipp P."/>
            <person name="O'Connor C.D."/>
            <person name="Goodhead I."/>
            <person name="Norbertzcak H."/>
            <person name="Harris B."/>
            <person name="Ormond D."/>
            <person name="Rance R."/>
            <person name="Quail M.A."/>
            <person name="Parkhill J."/>
            <person name="Stephens R.S."/>
            <person name="Clarke I.N."/>
        </authorList>
    </citation>
    <scope>NUCLEOTIDE SEQUENCE [LARGE SCALE GENOMIC DNA]</scope>
    <source>
        <strain>UCH-1/proctitis</strain>
    </source>
</reference>
<feature type="chain" id="PRO_1000121869" description="Glutamate-1-semialdehyde 2,1-aminomutase">
    <location>
        <begin position="1"/>
        <end position="422"/>
    </location>
</feature>
<feature type="modified residue" description="N6-(pyridoxal phosphate)lysine" evidence="1">
    <location>
        <position position="258"/>
    </location>
</feature>
<keyword id="KW-0963">Cytoplasm</keyword>
<keyword id="KW-0413">Isomerase</keyword>
<keyword id="KW-0627">Porphyrin biosynthesis</keyword>
<keyword id="KW-0663">Pyridoxal phosphate</keyword>
<comment type="catalytic activity">
    <reaction evidence="1">
        <text>(S)-4-amino-5-oxopentanoate = 5-aminolevulinate</text>
        <dbReference type="Rhea" id="RHEA:14265"/>
        <dbReference type="ChEBI" id="CHEBI:57501"/>
        <dbReference type="ChEBI" id="CHEBI:356416"/>
        <dbReference type="EC" id="5.4.3.8"/>
    </reaction>
</comment>
<comment type="cofactor">
    <cofactor evidence="1">
        <name>pyridoxal 5'-phosphate</name>
        <dbReference type="ChEBI" id="CHEBI:597326"/>
    </cofactor>
</comment>
<comment type="pathway">
    <text evidence="1">Porphyrin-containing compound metabolism; protoporphyrin-IX biosynthesis; 5-aminolevulinate from L-glutamyl-tRNA(Glu): step 2/2.</text>
</comment>
<comment type="subunit">
    <text evidence="1">Homodimer.</text>
</comment>
<comment type="subcellular location">
    <subcellularLocation>
        <location evidence="1">Cytoplasm</location>
    </subcellularLocation>
</comment>
<comment type="similarity">
    <text evidence="1">Belongs to the class-III pyridoxal-phosphate-dependent aminotransferase family. HemL subfamily.</text>
</comment>
<sequence length="422" mass="45940">MSHLFSKACQYFPGGVNSPVRACRAVNITPPIVARASKEVFIDSLDKTFIDFCGSWGSLIHGHSHPKICAAIRQGLERGSSYGLTSEQEILFAEEIFSYLGLETNYKIRFMSTGSEATMTAVRLARGITGRPIIIKFLGCYHGHADTFLQEKPFSHTSLDTLDLAHPLTLSLPFNDFPLFQTVMNSLGHKVAGVIFEPVCANMGVILPVPDFIEGVIQTCQQTGSFSIMDEVVTGFRVAQGGAAALYHVKPDILVFGKILGGGLPASAVVAPKDIMDHLAPEGKIFQAGTLSGNPLAMIAGKVSVNLCREQGFYTQLATIEQNFLSPIEHMIRTTGIPVTLVRYGSLFSFFFNPNRPNNLADAQLSDIEAFQKFYQSAFSKGVYLSPSPFEASFLSAAHSMESLDYAQTALIESLEQVFSLV</sequence>
<gene>
    <name evidence="1" type="primary">hemL</name>
    <name type="ordered locus">CTLon_0457</name>
</gene>
<evidence type="ECO:0000255" key="1">
    <source>
        <dbReference type="HAMAP-Rule" id="MF_00375"/>
    </source>
</evidence>
<accession>B0BBJ0</accession>
<dbReference type="EC" id="5.4.3.8" evidence="1"/>
<dbReference type="EMBL" id="AM884177">
    <property type="protein sequence ID" value="CAP06855.1"/>
    <property type="molecule type" value="Genomic_DNA"/>
</dbReference>
<dbReference type="RefSeq" id="WP_009873641.1">
    <property type="nucleotide sequence ID" value="NC_010280.2"/>
</dbReference>
<dbReference type="SMR" id="B0BBJ0"/>
<dbReference type="KEGG" id="ctl:CTLon_0457"/>
<dbReference type="HOGENOM" id="CLU_016922_1_5_0"/>
<dbReference type="UniPathway" id="UPA00251">
    <property type="reaction ID" value="UER00317"/>
</dbReference>
<dbReference type="Proteomes" id="UP001154401">
    <property type="component" value="Chromosome"/>
</dbReference>
<dbReference type="GO" id="GO:0005737">
    <property type="term" value="C:cytoplasm"/>
    <property type="evidence" value="ECO:0007669"/>
    <property type="project" value="UniProtKB-SubCell"/>
</dbReference>
<dbReference type="GO" id="GO:0042286">
    <property type="term" value="F:glutamate-1-semialdehyde 2,1-aminomutase activity"/>
    <property type="evidence" value="ECO:0007669"/>
    <property type="project" value="UniProtKB-UniRule"/>
</dbReference>
<dbReference type="GO" id="GO:0030170">
    <property type="term" value="F:pyridoxal phosphate binding"/>
    <property type="evidence" value="ECO:0007669"/>
    <property type="project" value="InterPro"/>
</dbReference>
<dbReference type="GO" id="GO:0008483">
    <property type="term" value="F:transaminase activity"/>
    <property type="evidence" value="ECO:0007669"/>
    <property type="project" value="InterPro"/>
</dbReference>
<dbReference type="GO" id="GO:0006782">
    <property type="term" value="P:protoporphyrinogen IX biosynthetic process"/>
    <property type="evidence" value="ECO:0007669"/>
    <property type="project" value="UniProtKB-UniRule"/>
</dbReference>
<dbReference type="CDD" id="cd00610">
    <property type="entry name" value="OAT_like"/>
    <property type="match status" value="1"/>
</dbReference>
<dbReference type="Gene3D" id="3.90.1150.10">
    <property type="entry name" value="Aspartate Aminotransferase, domain 1"/>
    <property type="match status" value="1"/>
</dbReference>
<dbReference type="Gene3D" id="3.40.640.10">
    <property type="entry name" value="Type I PLP-dependent aspartate aminotransferase-like (Major domain)"/>
    <property type="match status" value="1"/>
</dbReference>
<dbReference type="HAMAP" id="MF_00375">
    <property type="entry name" value="HemL_aminotrans_3"/>
    <property type="match status" value="1"/>
</dbReference>
<dbReference type="InterPro" id="IPR004639">
    <property type="entry name" value="4pyrrol_synth_GluAld_NH2Trfase"/>
</dbReference>
<dbReference type="InterPro" id="IPR005814">
    <property type="entry name" value="Aminotrans_3"/>
</dbReference>
<dbReference type="InterPro" id="IPR049704">
    <property type="entry name" value="Aminotrans_3_PPA_site"/>
</dbReference>
<dbReference type="InterPro" id="IPR015424">
    <property type="entry name" value="PyrdxlP-dep_Trfase"/>
</dbReference>
<dbReference type="InterPro" id="IPR015421">
    <property type="entry name" value="PyrdxlP-dep_Trfase_major"/>
</dbReference>
<dbReference type="InterPro" id="IPR015422">
    <property type="entry name" value="PyrdxlP-dep_Trfase_small"/>
</dbReference>
<dbReference type="NCBIfam" id="TIGR00713">
    <property type="entry name" value="hemL"/>
    <property type="match status" value="1"/>
</dbReference>
<dbReference type="NCBIfam" id="NF000818">
    <property type="entry name" value="PRK00062.1"/>
    <property type="match status" value="1"/>
</dbReference>
<dbReference type="NCBIfam" id="NF001864">
    <property type="entry name" value="PRK00615.1"/>
    <property type="match status" value="1"/>
</dbReference>
<dbReference type="PANTHER" id="PTHR43713">
    <property type="entry name" value="GLUTAMATE-1-SEMIALDEHYDE 2,1-AMINOMUTASE"/>
    <property type="match status" value="1"/>
</dbReference>
<dbReference type="PANTHER" id="PTHR43713:SF3">
    <property type="entry name" value="GLUTAMATE-1-SEMIALDEHYDE 2,1-AMINOMUTASE 1, CHLOROPLASTIC-RELATED"/>
    <property type="match status" value="1"/>
</dbReference>
<dbReference type="Pfam" id="PF00202">
    <property type="entry name" value="Aminotran_3"/>
    <property type="match status" value="1"/>
</dbReference>
<dbReference type="SUPFAM" id="SSF53383">
    <property type="entry name" value="PLP-dependent transferases"/>
    <property type="match status" value="1"/>
</dbReference>
<dbReference type="PROSITE" id="PS00600">
    <property type="entry name" value="AA_TRANSFER_CLASS_3"/>
    <property type="match status" value="1"/>
</dbReference>
<name>GSA_CHLTB</name>
<proteinExistence type="inferred from homology"/>